<protein>
    <recommendedName>
        <fullName evidence="1">2-C-methyl-D-erythritol 2,4-cyclodiphosphate synthase</fullName>
        <shortName evidence="1">MECDP-synthase</shortName>
        <shortName evidence="1">MECPP-synthase</shortName>
        <shortName evidence="1">MECPS</shortName>
        <ecNumber evidence="1">4.6.1.12</ecNumber>
    </recommendedName>
</protein>
<feature type="chain" id="PRO_1000202883" description="2-C-methyl-D-erythritol 2,4-cyclodiphosphate synthase">
    <location>
        <begin position="1"/>
        <end position="157"/>
    </location>
</feature>
<feature type="binding site" evidence="1">
    <location>
        <begin position="9"/>
        <end position="11"/>
    </location>
    <ligand>
        <name>4-CDP-2-C-methyl-D-erythritol 2-phosphate</name>
        <dbReference type="ChEBI" id="CHEBI:57919"/>
    </ligand>
</feature>
<feature type="binding site" evidence="1">
    <location>
        <position position="9"/>
    </location>
    <ligand>
        <name>a divalent metal cation</name>
        <dbReference type="ChEBI" id="CHEBI:60240"/>
    </ligand>
</feature>
<feature type="binding site" evidence="1">
    <location>
        <position position="11"/>
    </location>
    <ligand>
        <name>a divalent metal cation</name>
        <dbReference type="ChEBI" id="CHEBI:60240"/>
    </ligand>
</feature>
<feature type="binding site" evidence="1">
    <location>
        <begin position="35"/>
        <end position="36"/>
    </location>
    <ligand>
        <name>4-CDP-2-C-methyl-D-erythritol 2-phosphate</name>
        <dbReference type="ChEBI" id="CHEBI:57919"/>
    </ligand>
</feature>
<feature type="binding site" evidence="1">
    <location>
        <position position="43"/>
    </location>
    <ligand>
        <name>a divalent metal cation</name>
        <dbReference type="ChEBI" id="CHEBI:60240"/>
    </ligand>
</feature>
<feature type="binding site" evidence="1">
    <location>
        <begin position="57"/>
        <end position="59"/>
    </location>
    <ligand>
        <name>4-CDP-2-C-methyl-D-erythritol 2-phosphate</name>
        <dbReference type="ChEBI" id="CHEBI:57919"/>
    </ligand>
</feature>
<feature type="binding site" evidence="1">
    <location>
        <begin position="62"/>
        <end position="66"/>
    </location>
    <ligand>
        <name>4-CDP-2-C-methyl-D-erythritol 2-phosphate</name>
        <dbReference type="ChEBI" id="CHEBI:57919"/>
    </ligand>
</feature>
<feature type="binding site" evidence="1">
    <location>
        <begin position="101"/>
        <end position="107"/>
    </location>
    <ligand>
        <name>4-CDP-2-C-methyl-D-erythritol 2-phosphate</name>
        <dbReference type="ChEBI" id="CHEBI:57919"/>
    </ligand>
</feature>
<feature type="binding site" evidence="1">
    <location>
        <begin position="133"/>
        <end position="136"/>
    </location>
    <ligand>
        <name>4-CDP-2-C-methyl-D-erythritol 2-phosphate</name>
        <dbReference type="ChEBI" id="CHEBI:57919"/>
    </ligand>
</feature>
<feature type="binding site" evidence="1">
    <location>
        <position position="140"/>
    </location>
    <ligand>
        <name>4-CDP-2-C-methyl-D-erythritol 2-phosphate</name>
        <dbReference type="ChEBI" id="CHEBI:57919"/>
    </ligand>
</feature>
<feature type="binding site" evidence="1">
    <location>
        <position position="143"/>
    </location>
    <ligand>
        <name>4-CDP-2-C-methyl-D-erythritol 2-phosphate</name>
        <dbReference type="ChEBI" id="CHEBI:57919"/>
    </ligand>
</feature>
<feature type="site" description="Transition state stabilizer" evidence="1">
    <location>
        <position position="35"/>
    </location>
</feature>
<feature type="site" description="Transition state stabilizer" evidence="1">
    <location>
        <position position="134"/>
    </location>
</feature>
<sequence length="157" mass="17073">MIRIGQGYDVHKLAYDRELIVGGIKIPYEKGLLGHSDADVLLHAITDAIIGAIGAGDIGHFFPDTDMAFKDADSAELLEEIWQKVEADGFRLGNLDATIIAEKPKMAPYVEQMKLRIAELLHADSAQVNVKATTTEKLGFTGRKEGIASLAVVLLEK</sequence>
<proteinExistence type="inferred from homology"/>
<accession>C1KYG9</accession>
<evidence type="ECO:0000255" key="1">
    <source>
        <dbReference type="HAMAP-Rule" id="MF_00107"/>
    </source>
</evidence>
<reference key="1">
    <citation type="journal article" date="2012" name="BMC Genomics">
        <title>Comparative genomics and transcriptomics of lineages I, II, and III strains of Listeria monocytogenes.</title>
        <authorList>
            <person name="Hain T."/>
            <person name="Ghai R."/>
            <person name="Billion A."/>
            <person name="Kuenne C.T."/>
            <person name="Steinweg C."/>
            <person name="Izar B."/>
            <person name="Mohamed W."/>
            <person name="Mraheil M."/>
            <person name="Domann E."/>
            <person name="Schaffrath S."/>
            <person name="Karst U."/>
            <person name="Goesmann A."/>
            <person name="Oehm S."/>
            <person name="Puhler A."/>
            <person name="Merkl R."/>
            <person name="Vorwerk S."/>
            <person name="Glaser P."/>
            <person name="Garrido P."/>
            <person name="Rusniok C."/>
            <person name="Buchrieser C."/>
            <person name="Goebel W."/>
            <person name="Chakraborty T."/>
        </authorList>
    </citation>
    <scope>NUCLEOTIDE SEQUENCE [LARGE SCALE GENOMIC DNA]</scope>
    <source>
        <strain>CLIP80459</strain>
    </source>
</reference>
<gene>
    <name evidence="1" type="primary">ispF</name>
    <name type="ordered locus">Lm4b_00256</name>
</gene>
<dbReference type="EC" id="4.6.1.12" evidence="1"/>
<dbReference type="EMBL" id="FM242711">
    <property type="protein sequence ID" value="CAS04024.1"/>
    <property type="molecule type" value="Genomic_DNA"/>
</dbReference>
<dbReference type="RefSeq" id="WP_012681034.1">
    <property type="nucleotide sequence ID" value="NC_012488.1"/>
</dbReference>
<dbReference type="SMR" id="C1KYG9"/>
<dbReference type="KEGG" id="lmc:Lm4b_00256"/>
<dbReference type="HOGENOM" id="CLU_084630_2_0_9"/>
<dbReference type="UniPathway" id="UPA00056">
    <property type="reaction ID" value="UER00095"/>
</dbReference>
<dbReference type="GO" id="GO:0008685">
    <property type="term" value="F:2-C-methyl-D-erythritol 2,4-cyclodiphosphate synthase activity"/>
    <property type="evidence" value="ECO:0007669"/>
    <property type="project" value="UniProtKB-UniRule"/>
</dbReference>
<dbReference type="GO" id="GO:0046872">
    <property type="term" value="F:metal ion binding"/>
    <property type="evidence" value="ECO:0007669"/>
    <property type="project" value="UniProtKB-KW"/>
</dbReference>
<dbReference type="GO" id="GO:0019288">
    <property type="term" value="P:isopentenyl diphosphate biosynthetic process, methylerythritol 4-phosphate pathway"/>
    <property type="evidence" value="ECO:0007669"/>
    <property type="project" value="UniProtKB-UniRule"/>
</dbReference>
<dbReference type="GO" id="GO:0016114">
    <property type="term" value="P:terpenoid biosynthetic process"/>
    <property type="evidence" value="ECO:0007669"/>
    <property type="project" value="InterPro"/>
</dbReference>
<dbReference type="CDD" id="cd00554">
    <property type="entry name" value="MECDP_synthase"/>
    <property type="match status" value="1"/>
</dbReference>
<dbReference type="FunFam" id="3.30.1330.50:FF:000001">
    <property type="entry name" value="2-C-methyl-D-erythritol 2,4-cyclodiphosphate synthase"/>
    <property type="match status" value="1"/>
</dbReference>
<dbReference type="Gene3D" id="3.30.1330.50">
    <property type="entry name" value="2-C-methyl-D-erythritol 2,4-cyclodiphosphate synthase"/>
    <property type="match status" value="1"/>
</dbReference>
<dbReference type="HAMAP" id="MF_00107">
    <property type="entry name" value="IspF"/>
    <property type="match status" value="1"/>
</dbReference>
<dbReference type="InterPro" id="IPR003526">
    <property type="entry name" value="MECDP_synthase"/>
</dbReference>
<dbReference type="InterPro" id="IPR020555">
    <property type="entry name" value="MECDP_synthase_CS"/>
</dbReference>
<dbReference type="InterPro" id="IPR036571">
    <property type="entry name" value="MECDP_synthase_sf"/>
</dbReference>
<dbReference type="NCBIfam" id="TIGR00151">
    <property type="entry name" value="ispF"/>
    <property type="match status" value="1"/>
</dbReference>
<dbReference type="PANTHER" id="PTHR43181">
    <property type="entry name" value="2-C-METHYL-D-ERYTHRITOL 2,4-CYCLODIPHOSPHATE SYNTHASE, CHLOROPLASTIC"/>
    <property type="match status" value="1"/>
</dbReference>
<dbReference type="PANTHER" id="PTHR43181:SF1">
    <property type="entry name" value="2-C-METHYL-D-ERYTHRITOL 2,4-CYCLODIPHOSPHATE SYNTHASE, CHLOROPLASTIC"/>
    <property type="match status" value="1"/>
</dbReference>
<dbReference type="Pfam" id="PF02542">
    <property type="entry name" value="YgbB"/>
    <property type="match status" value="1"/>
</dbReference>
<dbReference type="SUPFAM" id="SSF69765">
    <property type="entry name" value="IpsF-like"/>
    <property type="match status" value="1"/>
</dbReference>
<dbReference type="PROSITE" id="PS01350">
    <property type="entry name" value="ISPF"/>
    <property type="match status" value="1"/>
</dbReference>
<comment type="function">
    <text evidence="1">Involved in the biosynthesis of isopentenyl diphosphate (IPP) and dimethylallyl diphosphate (DMAPP), two major building blocks of isoprenoid compounds. Catalyzes the conversion of 4-diphosphocytidyl-2-C-methyl-D-erythritol 2-phosphate (CDP-ME2P) to 2-C-methyl-D-erythritol 2,4-cyclodiphosphate (ME-CPP) with a corresponding release of cytidine 5-monophosphate (CMP).</text>
</comment>
<comment type="catalytic activity">
    <reaction evidence="1">
        <text>4-CDP-2-C-methyl-D-erythritol 2-phosphate = 2-C-methyl-D-erythritol 2,4-cyclic diphosphate + CMP</text>
        <dbReference type="Rhea" id="RHEA:23864"/>
        <dbReference type="ChEBI" id="CHEBI:57919"/>
        <dbReference type="ChEBI" id="CHEBI:58483"/>
        <dbReference type="ChEBI" id="CHEBI:60377"/>
        <dbReference type="EC" id="4.6.1.12"/>
    </reaction>
</comment>
<comment type="cofactor">
    <cofactor evidence="1">
        <name>a divalent metal cation</name>
        <dbReference type="ChEBI" id="CHEBI:60240"/>
    </cofactor>
    <text evidence="1">Binds 1 divalent metal cation per subunit.</text>
</comment>
<comment type="pathway">
    <text evidence="1">Isoprenoid biosynthesis; isopentenyl diphosphate biosynthesis via DXP pathway; isopentenyl diphosphate from 1-deoxy-D-xylulose 5-phosphate: step 4/6.</text>
</comment>
<comment type="subunit">
    <text evidence="1">Homotrimer.</text>
</comment>
<comment type="similarity">
    <text evidence="1">Belongs to the IspF family.</text>
</comment>
<name>ISPF_LISMC</name>
<keyword id="KW-0414">Isoprene biosynthesis</keyword>
<keyword id="KW-0456">Lyase</keyword>
<keyword id="KW-0479">Metal-binding</keyword>
<organism>
    <name type="scientific">Listeria monocytogenes serotype 4b (strain CLIP80459)</name>
    <dbReference type="NCBI Taxonomy" id="568819"/>
    <lineage>
        <taxon>Bacteria</taxon>
        <taxon>Bacillati</taxon>
        <taxon>Bacillota</taxon>
        <taxon>Bacilli</taxon>
        <taxon>Bacillales</taxon>
        <taxon>Listeriaceae</taxon>
        <taxon>Listeria</taxon>
    </lineage>
</organism>